<protein>
    <recommendedName>
        <fullName evidence="1">Ribosomal RNA small subunit methyltransferase J</fullName>
        <ecNumber evidence="1">2.1.1.242</ecNumber>
    </recommendedName>
    <alternativeName>
        <fullName evidence="1">16S rRNA m2G1516 methyltransferase</fullName>
    </alternativeName>
    <alternativeName>
        <fullName evidence="1">rRNA (guanine-N(2)-)-methyltransferase</fullName>
    </alternativeName>
</protein>
<gene>
    <name evidence="1" type="primary">rsmJ</name>
    <name type="synonym">yhiQ</name>
    <name type="ordered locus">BWG_3186</name>
</gene>
<keyword id="KW-0963">Cytoplasm</keyword>
<keyword id="KW-0489">Methyltransferase</keyword>
<keyword id="KW-0698">rRNA processing</keyword>
<keyword id="KW-0949">S-adenosyl-L-methionine</keyword>
<keyword id="KW-0808">Transferase</keyword>
<name>RSMJ_ECOBW</name>
<accession>C4ZW44</accession>
<comment type="function">
    <text evidence="1">Specifically methylates the guanosine in position 1516 of 16S rRNA.</text>
</comment>
<comment type="catalytic activity">
    <reaction evidence="1">
        <text>guanosine(1516) in 16S rRNA + S-adenosyl-L-methionine = N(2)-methylguanosine(1516) in 16S rRNA + S-adenosyl-L-homocysteine + H(+)</text>
        <dbReference type="Rhea" id="RHEA:43220"/>
        <dbReference type="Rhea" id="RHEA-COMP:10412"/>
        <dbReference type="Rhea" id="RHEA-COMP:10413"/>
        <dbReference type="ChEBI" id="CHEBI:15378"/>
        <dbReference type="ChEBI" id="CHEBI:57856"/>
        <dbReference type="ChEBI" id="CHEBI:59789"/>
        <dbReference type="ChEBI" id="CHEBI:74269"/>
        <dbReference type="ChEBI" id="CHEBI:74481"/>
        <dbReference type="EC" id="2.1.1.242"/>
    </reaction>
</comment>
<comment type="subcellular location">
    <subcellularLocation>
        <location evidence="1">Cytoplasm</location>
    </subcellularLocation>
</comment>
<comment type="similarity">
    <text evidence="1">Belongs to the methyltransferase superfamily. RsmJ family.</text>
</comment>
<organism>
    <name type="scientific">Escherichia coli (strain K12 / MC4100 / BW2952)</name>
    <dbReference type="NCBI Taxonomy" id="595496"/>
    <lineage>
        <taxon>Bacteria</taxon>
        <taxon>Pseudomonadati</taxon>
        <taxon>Pseudomonadota</taxon>
        <taxon>Gammaproteobacteria</taxon>
        <taxon>Enterobacterales</taxon>
        <taxon>Enterobacteriaceae</taxon>
        <taxon>Escherichia</taxon>
    </lineage>
</organism>
<sequence length="250" mass="26949">MKICLIDETGTGDGALSVLAARWGLEHDEDNLMALVLTPEHLELRKRDEPKLGGIFVDFVGGAMAHRRKFGGGRGEAVAKAVGIKGDYLPDVVDATAGLGRDAFVLASVGCRVRMLERNPVVAALLDDGLARGYADAEIGGWLQERLQLIHASSLTALTDITPRPQVVYLDPMFPHKQKSALVKKEMRVFQSLVGPDLDADGLLEPARLLATKRVVVKRPDYAPPLANVATPNAVVTKGHRFDIYAGTPV</sequence>
<evidence type="ECO:0000255" key="1">
    <source>
        <dbReference type="HAMAP-Rule" id="MF_01523"/>
    </source>
</evidence>
<dbReference type="EC" id="2.1.1.242" evidence="1"/>
<dbReference type="EMBL" id="CP001396">
    <property type="protein sequence ID" value="ACR65091.1"/>
    <property type="molecule type" value="Genomic_DNA"/>
</dbReference>
<dbReference type="RefSeq" id="WP_000686620.1">
    <property type="nucleotide sequence ID" value="NC_012759.1"/>
</dbReference>
<dbReference type="SMR" id="C4ZW44"/>
<dbReference type="KEGG" id="ebw:BWG_3186"/>
<dbReference type="HOGENOM" id="CLU_076324_0_0_6"/>
<dbReference type="GO" id="GO:0005737">
    <property type="term" value="C:cytoplasm"/>
    <property type="evidence" value="ECO:0007669"/>
    <property type="project" value="UniProtKB-SubCell"/>
</dbReference>
<dbReference type="GO" id="GO:0008990">
    <property type="term" value="F:rRNA (guanine-N2-)-methyltransferase activity"/>
    <property type="evidence" value="ECO:0007669"/>
    <property type="project" value="UniProtKB-UniRule"/>
</dbReference>
<dbReference type="CDD" id="cd02440">
    <property type="entry name" value="AdoMet_MTases"/>
    <property type="match status" value="1"/>
</dbReference>
<dbReference type="FunFam" id="3.40.1630.10:FF:000001">
    <property type="entry name" value="Ribosomal RNA small subunit methyltransferase J"/>
    <property type="match status" value="1"/>
</dbReference>
<dbReference type="FunFam" id="3.40.50.150:FF:000072">
    <property type="entry name" value="Ribosomal RNA small subunit methyltransferase J"/>
    <property type="match status" value="1"/>
</dbReference>
<dbReference type="Gene3D" id="3.40.50.150">
    <property type="entry name" value="Vaccinia Virus protein VP39"/>
    <property type="match status" value="1"/>
</dbReference>
<dbReference type="Gene3D" id="3.40.1630.10">
    <property type="entry name" value="YhiQ-like domain"/>
    <property type="match status" value="1"/>
</dbReference>
<dbReference type="HAMAP" id="MF_01523">
    <property type="entry name" value="16SrRNA_methyltr_J"/>
    <property type="match status" value="1"/>
</dbReference>
<dbReference type="InterPro" id="IPR007536">
    <property type="entry name" value="16SrRNA_methylTrfase_J"/>
</dbReference>
<dbReference type="InterPro" id="IPR029063">
    <property type="entry name" value="SAM-dependent_MTases_sf"/>
</dbReference>
<dbReference type="NCBIfam" id="NF008012">
    <property type="entry name" value="PRK10742.1"/>
    <property type="match status" value="1"/>
</dbReference>
<dbReference type="PANTHER" id="PTHR36112">
    <property type="entry name" value="RIBOSOMAL RNA SMALL SUBUNIT METHYLTRANSFERASE J"/>
    <property type="match status" value="1"/>
</dbReference>
<dbReference type="PANTHER" id="PTHR36112:SF1">
    <property type="entry name" value="RIBOSOMAL RNA SMALL SUBUNIT METHYLTRANSFERASE J"/>
    <property type="match status" value="1"/>
</dbReference>
<dbReference type="Pfam" id="PF04445">
    <property type="entry name" value="SAM_MT"/>
    <property type="match status" value="1"/>
</dbReference>
<dbReference type="SUPFAM" id="SSF53335">
    <property type="entry name" value="S-adenosyl-L-methionine-dependent methyltransferases"/>
    <property type="match status" value="1"/>
</dbReference>
<feature type="chain" id="PRO_1000215379" description="Ribosomal RNA small subunit methyltransferase J">
    <location>
        <begin position="1"/>
        <end position="250"/>
    </location>
</feature>
<feature type="binding site" evidence="1">
    <location>
        <begin position="101"/>
        <end position="102"/>
    </location>
    <ligand>
        <name>S-adenosyl-L-methionine</name>
        <dbReference type="ChEBI" id="CHEBI:59789"/>
    </ligand>
</feature>
<feature type="binding site" evidence="1">
    <location>
        <begin position="117"/>
        <end position="118"/>
    </location>
    <ligand>
        <name>S-adenosyl-L-methionine</name>
        <dbReference type="ChEBI" id="CHEBI:59789"/>
    </ligand>
</feature>
<feature type="binding site" evidence="1">
    <location>
        <begin position="153"/>
        <end position="154"/>
    </location>
    <ligand>
        <name>S-adenosyl-L-methionine</name>
        <dbReference type="ChEBI" id="CHEBI:59789"/>
    </ligand>
</feature>
<feature type="binding site" evidence="1">
    <location>
        <position position="171"/>
    </location>
    <ligand>
        <name>S-adenosyl-L-methionine</name>
        <dbReference type="ChEBI" id="CHEBI:59789"/>
    </ligand>
</feature>
<proteinExistence type="inferred from homology"/>
<reference key="1">
    <citation type="journal article" date="2009" name="J. Bacteriol.">
        <title>Genomic sequencing reveals regulatory mutations and recombinational events in the widely used MC4100 lineage of Escherichia coli K-12.</title>
        <authorList>
            <person name="Ferenci T."/>
            <person name="Zhou Z."/>
            <person name="Betteridge T."/>
            <person name="Ren Y."/>
            <person name="Liu Y."/>
            <person name="Feng L."/>
            <person name="Reeves P.R."/>
            <person name="Wang L."/>
        </authorList>
    </citation>
    <scope>NUCLEOTIDE SEQUENCE [LARGE SCALE GENOMIC DNA]</scope>
    <source>
        <strain>K12 / MC4100 / BW2952</strain>
    </source>
</reference>